<protein>
    <recommendedName>
        <fullName evidence="1">Lipoyl synthase</fullName>
        <ecNumber evidence="1">2.8.1.8</ecNumber>
    </recommendedName>
    <alternativeName>
        <fullName evidence="1">Lip-syn</fullName>
        <shortName evidence="1">LS</shortName>
    </alternativeName>
    <alternativeName>
        <fullName evidence="1">Lipoate synthase</fullName>
    </alternativeName>
    <alternativeName>
        <fullName evidence="1">Lipoic acid synthase</fullName>
    </alternativeName>
    <alternativeName>
        <fullName evidence="1">Sulfur insertion protein LipA</fullName>
    </alternativeName>
</protein>
<comment type="function">
    <text evidence="1">Catalyzes the radical-mediated insertion of two sulfur atoms into the C-6 and C-8 positions of the octanoyl moiety bound to the lipoyl domains of lipoate-dependent enzymes, thereby converting the octanoylated domains into lipoylated derivatives.</text>
</comment>
<comment type="catalytic activity">
    <reaction evidence="1">
        <text>[[Fe-S] cluster scaffold protein carrying a second [4Fe-4S](2+) cluster] + N(6)-octanoyl-L-lysyl-[protein] + 2 oxidized [2Fe-2S]-[ferredoxin] + 2 S-adenosyl-L-methionine + 4 H(+) = [[Fe-S] cluster scaffold protein] + N(6)-[(R)-dihydrolipoyl]-L-lysyl-[protein] + 4 Fe(3+) + 2 hydrogen sulfide + 2 5'-deoxyadenosine + 2 L-methionine + 2 reduced [2Fe-2S]-[ferredoxin]</text>
        <dbReference type="Rhea" id="RHEA:16585"/>
        <dbReference type="Rhea" id="RHEA-COMP:9928"/>
        <dbReference type="Rhea" id="RHEA-COMP:10000"/>
        <dbReference type="Rhea" id="RHEA-COMP:10001"/>
        <dbReference type="Rhea" id="RHEA-COMP:10475"/>
        <dbReference type="Rhea" id="RHEA-COMP:14568"/>
        <dbReference type="Rhea" id="RHEA-COMP:14569"/>
        <dbReference type="ChEBI" id="CHEBI:15378"/>
        <dbReference type="ChEBI" id="CHEBI:17319"/>
        <dbReference type="ChEBI" id="CHEBI:29034"/>
        <dbReference type="ChEBI" id="CHEBI:29919"/>
        <dbReference type="ChEBI" id="CHEBI:33722"/>
        <dbReference type="ChEBI" id="CHEBI:33737"/>
        <dbReference type="ChEBI" id="CHEBI:33738"/>
        <dbReference type="ChEBI" id="CHEBI:57844"/>
        <dbReference type="ChEBI" id="CHEBI:59789"/>
        <dbReference type="ChEBI" id="CHEBI:78809"/>
        <dbReference type="ChEBI" id="CHEBI:83100"/>
        <dbReference type="EC" id="2.8.1.8"/>
    </reaction>
</comment>
<comment type="cofactor">
    <cofactor evidence="1">
        <name>[4Fe-4S] cluster</name>
        <dbReference type="ChEBI" id="CHEBI:49883"/>
    </cofactor>
    <text evidence="1">Binds 2 [4Fe-4S] clusters per subunit. One cluster is coordinated with 3 cysteines and an exchangeable S-adenosyl-L-methionine.</text>
</comment>
<comment type="pathway">
    <text evidence="1">Protein modification; protein lipoylation via endogenous pathway; protein N(6)-(lipoyl)lysine from octanoyl-[acyl-carrier-protein]: step 2/2.</text>
</comment>
<comment type="subcellular location">
    <subcellularLocation>
        <location evidence="1">Cytoplasm</location>
    </subcellularLocation>
</comment>
<comment type="similarity">
    <text evidence="1">Belongs to the radical SAM superfamily. Lipoyl synthase family.</text>
</comment>
<feature type="chain" id="PRO_0000325256" description="Lipoyl synthase">
    <location>
        <begin position="1"/>
        <end position="327"/>
    </location>
</feature>
<feature type="domain" description="Radical SAM core" evidence="2">
    <location>
        <begin position="83"/>
        <end position="302"/>
    </location>
</feature>
<feature type="binding site" evidence="1">
    <location>
        <position position="72"/>
    </location>
    <ligand>
        <name>[4Fe-4S] cluster</name>
        <dbReference type="ChEBI" id="CHEBI:49883"/>
        <label>1</label>
    </ligand>
</feature>
<feature type="binding site" evidence="1">
    <location>
        <position position="77"/>
    </location>
    <ligand>
        <name>[4Fe-4S] cluster</name>
        <dbReference type="ChEBI" id="CHEBI:49883"/>
        <label>1</label>
    </ligand>
</feature>
<feature type="binding site" evidence="1">
    <location>
        <position position="83"/>
    </location>
    <ligand>
        <name>[4Fe-4S] cluster</name>
        <dbReference type="ChEBI" id="CHEBI:49883"/>
        <label>1</label>
    </ligand>
</feature>
<feature type="binding site" evidence="1">
    <location>
        <position position="98"/>
    </location>
    <ligand>
        <name>[4Fe-4S] cluster</name>
        <dbReference type="ChEBI" id="CHEBI:49883"/>
        <label>2</label>
        <note>4Fe-4S-S-AdoMet</note>
    </ligand>
</feature>
<feature type="binding site" evidence="1">
    <location>
        <position position="102"/>
    </location>
    <ligand>
        <name>[4Fe-4S] cluster</name>
        <dbReference type="ChEBI" id="CHEBI:49883"/>
        <label>2</label>
        <note>4Fe-4S-S-AdoMet</note>
    </ligand>
</feature>
<feature type="binding site" evidence="1">
    <location>
        <position position="105"/>
    </location>
    <ligand>
        <name>[4Fe-4S] cluster</name>
        <dbReference type="ChEBI" id="CHEBI:49883"/>
        <label>2</label>
        <note>4Fe-4S-S-AdoMet</note>
    </ligand>
</feature>
<feature type="binding site" evidence="1">
    <location>
        <position position="313"/>
    </location>
    <ligand>
        <name>[4Fe-4S] cluster</name>
        <dbReference type="ChEBI" id="CHEBI:49883"/>
        <label>1</label>
    </ligand>
</feature>
<proteinExistence type="inferred from homology"/>
<organism>
    <name type="scientific">Francisella tularensis subsp. tularensis (strain WY96-3418)</name>
    <dbReference type="NCBI Taxonomy" id="418136"/>
    <lineage>
        <taxon>Bacteria</taxon>
        <taxon>Pseudomonadati</taxon>
        <taxon>Pseudomonadota</taxon>
        <taxon>Gammaproteobacteria</taxon>
        <taxon>Thiotrichales</taxon>
        <taxon>Francisellaceae</taxon>
        <taxon>Francisella</taxon>
    </lineage>
</organism>
<accession>A4IY90</accession>
<gene>
    <name evidence="1" type="primary">lipA</name>
    <name type="ordered locus">FTW_1075</name>
</gene>
<sequence length="327" mass="36840">MKEISGIKVKVESGSKYTTDHGFHAVKDGIRNKKENAVHVRKPDWLKVQKQDSKEYLKVKSITKKHKLSTVCEEARCPNINECWSHGTATIMLMGSVCTRACKFCSVDTGNPKGWLDKDEPMNAAESVKLMGLEYVVLTSVDRDDLEDGGAGHYAATITAIKNLDENIKVEALTPDFAGINENIDKIINTKVDVIAQNIETVERLTHPVRDPRAGYWQTLNFLKYVKQKSPNVLTKTSIMVGLGETDEEIYKTMDDARSVGVDIITLGQYMQPTKHHLSVERFVTPQQFEEYRKVGLEKGFLEVASGPMVRSSYRADRVFKRNNLDL</sequence>
<keyword id="KW-0004">4Fe-4S</keyword>
<keyword id="KW-0963">Cytoplasm</keyword>
<keyword id="KW-0408">Iron</keyword>
<keyword id="KW-0411">Iron-sulfur</keyword>
<keyword id="KW-0479">Metal-binding</keyword>
<keyword id="KW-0949">S-adenosyl-L-methionine</keyword>
<keyword id="KW-0808">Transferase</keyword>
<reference key="1">
    <citation type="journal article" date="2007" name="PLoS ONE">
        <title>Complete genomic characterization of a pathogenic A.II strain of Francisella tularensis subspecies tularensis.</title>
        <authorList>
            <person name="Beckstrom-Sternberg S.M."/>
            <person name="Auerbach R.K."/>
            <person name="Godbole S."/>
            <person name="Pearson J.V."/>
            <person name="Beckstrom-Sternberg J.S."/>
            <person name="Deng Z."/>
            <person name="Munk C."/>
            <person name="Kubota K."/>
            <person name="Zhou Y."/>
            <person name="Bruce D."/>
            <person name="Noronha J."/>
            <person name="Scheuermann R.H."/>
            <person name="Wang A."/>
            <person name="Wei X."/>
            <person name="Wang J."/>
            <person name="Hao J."/>
            <person name="Wagner D.M."/>
            <person name="Brettin T.S."/>
            <person name="Brown N."/>
            <person name="Gilna P."/>
            <person name="Keim P.S."/>
        </authorList>
    </citation>
    <scope>NUCLEOTIDE SEQUENCE [LARGE SCALE GENOMIC DNA]</scope>
    <source>
        <strain>WY96-3418</strain>
    </source>
</reference>
<name>LIPA_FRATW</name>
<dbReference type="EC" id="2.8.1.8" evidence="1"/>
<dbReference type="EMBL" id="CP000608">
    <property type="protein sequence ID" value="ABO46891.1"/>
    <property type="molecule type" value="Genomic_DNA"/>
</dbReference>
<dbReference type="RefSeq" id="WP_003018819.1">
    <property type="nucleotide sequence ID" value="NC_009257.1"/>
</dbReference>
<dbReference type="SMR" id="A4IY90"/>
<dbReference type="GeneID" id="75265235"/>
<dbReference type="KEGG" id="ftw:FTW_1075"/>
<dbReference type="HOGENOM" id="CLU_033144_2_0_6"/>
<dbReference type="UniPathway" id="UPA00538">
    <property type="reaction ID" value="UER00593"/>
</dbReference>
<dbReference type="GO" id="GO:0005737">
    <property type="term" value="C:cytoplasm"/>
    <property type="evidence" value="ECO:0007669"/>
    <property type="project" value="UniProtKB-SubCell"/>
</dbReference>
<dbReference type="GO" id="GO:0051539">
    <property type="term" value="F:4 iron, 4 sulfur cluster binding"/>
    <property type="evidence" value="ECO:0007669"/>
    <property type="project" value="UniProtKB-UniRule"/>
</dbReference>
<dbReference type="GO" id="GO:0016992">
    <property type="term" value="F:lipoate synthase activity"/>
    <property type="evidence" value="ECO:0007669"/>
    <property type="project" value="UniProtKB-UniRule"/>
</dbReference>
<dbReference type="GO" id="GO:0046872">
    <property type="term" value="F:metal ion binding"/>
    <property type="evidence" value="ECO:0007669"/>
    <property type="project" value="UniProtKB-KW"/>
</dbReference>
<dbReference type="FunFam" id="3.20.20.70:FF:000040">
    <property type="entry name" value="Lipoyl synthase"/>
    <property type="match status" value="1"/>
</dbReference>
<dbReference type="Gene3D" id="3.20.20.70">
    <property type="entry name" value="Aldolase class I"/>
    <property type="match status" value="1"/>
</dbReference>
<dbReference type="HAMAP" id="MF_00206">
    <property type="entry name" value="Lipoyl_synth"/>
    <property type="match status" value="1"/>
</dbReference>
<dbReference type="InterPro" id="IPR013785">
    <property type="entry name" value="Aldolase_TIM"/>
</dbReference>
<dbReference type="InterPro" id="IPR006638">
    <property type="entry name" value="Elp3/MiaA/NifB-like_rSAM"/>
</dbReference>
<dbReference type="InterPro" id="IPR031691">
    <property type="entry name" value="LIAS_N"/>
</dbReference>
<dbReference type="InterPro" id="IPR003698">
    <property type="entry name" value="Lipoyl_synth"/>
</dbReference>
<dbReference type="InterPro" id="IPR007197">
    <property type="entry name" value="rSAM"/>
</dbReference>
<dbReference type="NCBIfam" id="TIGR00510">
    <property type="entry name" value="lipA"/>
    <property type="match status" value="1"/>
</dbReference>
<dbReference type="NCBIfam" id="NF004019">
    <property type="entry name" value="PRK05481.1"/>
    <property type="match status" value="1"/>
</dbReference>
<dbReference type="NCBIfam" id="NF009544">
    <property type="entry name" value="PRK12928.1"/>
    <property type="match status" value="1"/>
</dbReference>
<dbReference type="PANTHER" id="PTHR10949">
    <property type="entry name" value="LIPOYL SYNTHASE"/>
    <property type="match status" value="1"/>
</dbReference>
<dbReference type="PANTHER" id="PTHR10949:SF0">
    <property type="entry name" value="LIPOYL SYNTHASE, MITOCHONDRIAL"/>
    <property type="match status" value="1"/>
</dbReference>
<dbReference type="Pfam" id="PF16881">
    <property type="entry name" value="LIAS_N"/>
    <property type="match status" value="1"/>
</dbReference>
<dbReference type="Pfam" id="PF04055">
    <property type="entry name" value="Radical_SAM"/>
    <property type="match status" value="1"/>
</dbReference>
<dbReference type="PIRSF" id="PIRSF005963">
    <property type="entry name" value="Lipoyl_synth"/>
    <property type="match status" value="1"/>
</dbReference>
<dbReference type="SFLD" id="SFLDF00271">
    <property type="entry name" value="lipoyl_synthase"/>
    <property type="match status" value="1"/>
</dbReference>
<dbReference type="SFLD" id="SFLDG01058">
    <property type="entry name" value="lipoyl_synthase_like"/>
    <property type="match status" value="1"/>
</dbReference>
<dbReference type="SMART" id="SM00729">
    <property type="entry name" value="Elp3"/>
    <property type="match status" value="1"/>
</dbReference>
<dbReference type="SUPFAM" id="SSF102114">
    <property type="entry name" value="Radical SAM enzymes"/>
    <property type="match status" value="1"/>
</dbReference>
<dbReference type="PROSITE" id="PS51918">
    <property type="entry name" value="RADICAL_SAM"/>
    <property type="match status" value="1"/>
</dbReference>
<evidence type="ECO:0000255" key="1">
    <source>
        <dbReference type="HAMAP-Rule" id="MF_00206"/>
    </source>
</evidence>
<evidence type="ECO:0000255" key="2">
    <source>
        <dbReference type="PROSITE-ProRule" id="PRU01266"/>
    </source>
</evidence>